<sequence>MNNLRTVSDTKRAFYSIHTRPVNSVYRRVVEELMVEMHLLRVNEDFRYDPIFALGVTTSFDRFMDGYQPENDKDAIFSAICKAQEADPVQMKKDGQRLTELAQSKSAQEMLDWITQAANSGGDELQWQLRNIAQNPKFKYSRLFAIGLFTLLELSEGNITQDEESLAEFLPNICTVLNISESKLQKDLEIYRGNLDKIAQVRQAMDDILEAQKKRREADQAKKEGSDDTPTTEASTPDSEPTSEVSS</sequence>
<gene>
    <name evidence="1" type="primary">thf1</name>
    <name type="ordered locus">AM1_4891</name>
</gene>
<proteinExistence type="inferred from homology"/>
<reference key="1">
    <citation type="journal article" date="2008" name="Proc. Natl. Acad. Sci. U.S.A.">
        <title>Niche adaptation and genome expansion in the chlorophyll d-producing cyanobacterium Acaryochloris marina.</title>
        <authorList>
            <person name="Swingley W.D."/>
            <person name="Chen M."/>
            <person name="Cheung P.C."/>
            <person name="Conrad A.L."/>
            <person name="Dejesa L.C."/>
            <person name="Hao J."/>
            <person name="Honchak B.M."/>
            <person name="Karbach L.E."/>
            <person name="Kurdoglu A."/>
            <person name="Lahiri S."/>
            <person name="Mastrian S.D."/>
            <person name="Miyashita H."/>
            <person name="Page L."/>
            <person name="Ramakrishna P."/>
            <person name="Satoh S."/>
            <person name="Sattley W.M."/>
            <person name="Shimada Y."/>
            <person name="Taylor H.L."/>
            <person name="Tomo T."/>
            <person name="Tsuchiya T."/>
            <person name="Wang Z.T."/>
            <person name="Raymond J."/>
            <person name="Mimuro M."/>
            <person name="Blankenship R.E."/>
            <person name="Touchman J.W."/>
        </authorList>
    </citation>
    <scope>NUCLEOTIDE SEQUENCE [LARGE SCALE GENOMIC DNA]</scope>
    <source>
        <strain>MBIC 11017</strain>
    </source>
</reference>
<accession>B0C3M8</accession>
<evidence type="ECO:0000255" key="1">
    <source>
        <dbReference type="HAMAP-Rule" id="MF_01843"/>
    </source>
</evidence>
<evidence type="ECO:0000256" key="2">
    <source>
        <dbReference type="SAM" id="MobiDB-lite"/>
    </source>
</evidence>
<keyword id="KW-0175">Coiled coil</keyword>
<keyword id="KW-1185">Reference proteome</keyword>
<protein>
    <recommendedName>
        <fullName evidence="1">Protein Thf1</fullName>
    </recommendedName>
</protein>
<name>THF1_ACAM1</name>
<organism>
    <name type="scientific">Acaryochloris marina (strain MBIC 11017)</name>
    <dbReference type="NCBI Taxonomy" id="329726"/>
    <lineage>
        <taxon>Bacteria</taxon>
        <taxon>Bacillati</taxon>
        <taxon>Cyanobacteriota</taxon>
        <taxon>Cyanophyceae</taxon>
        <taxon>Acaryochloridales</taxon>
        <taxon>Acaryochloridaceae</taxon>
        <taxon>Acaryochloris</taxon>
    </lineage>
</organism>
<dbReference type="EMBL" id="CP000828">
    <property type="protein sequence ID" value="ABW29862.1"/>
    <property type="molecule type" value="Genomic_DNA"/>
</dbReference>
<dbReference type="SMR" id="B0C3M8"/>
<dbReference type="STRING" id="329726.AM1_4891"/>
<dbReference type="KEGG" id="amr:AM1_4891"/>
<dbReference type="eggNOG" id="ENOG502Z86M">
    <property type="taxonomic scope" value="Bacteria"/>
</dbReference>
<dbReference type="HOGENOM" id="CLU_079763_1_0_3"/>
<dbReference type="OrthoDB" id="463078at2"/>
<dbReference type="Proteomes" id="UP000000268">
    <property type="component" value="Chromosome"/>
</dbReference>
<dbReference type="GO" id="GO:0030096">
    <property type="term" value="C:plasma membrane-derived thylakoid photosystem II"/>
    <property type="evidence" value="ECO:0007669"/>
    <property type="project" value="TreeGrafter"/>
</dbReference>
<dbReference type="GO" id="GO:0010207">
    <property type="term" value="P:photosystem II assembly"/>
    <property type="evidence" value="ECO:0007669"/>
    <property type="project" value="InterPro"/>
</dbReference>
<dbReference type="HAMAP" id="MF_01843">
    <property type="entry name" value="Thf1"/>
    <property type="match status" value="1"/>
</dbReference>
<dbReference type="InterPro" id="IPR017499">
    <property type="entry name" value="Thf1"/>
</dbReference>
<dbReference type="NCBIfam" id="TIGR03060">
    <property type="entry name" value="PS_II_psb29"/>
    <property type="match status" value="1"/>
</dbReference>
<dbReference type="PANTHER" id="PTHR34793">
    <property type="entry name" value="PROTEIN THYLAKOID FORMATION 1, CHLOROPLASTIC"/>
    <property type="match status" value="1"/>
</dbReference>
<dbReference type="PANTHER" id="PTHR34793:SF1">
    <property type="entry name" value="PROTEIN THYLAKOID FORMATION 1, CHLOROPLASTIC"/>
    <property type="match status" value="1"/>
</dbReference>
<dbReference type="Pfam" id="PF11264">
    <property type="entry name" value="ThylakoidFormat"/>
    <property type="match status" value="1"/>
</dbReference>
<feature type="chain" id="PRO_1000088468" description="Protein Thf1">
    <location>
        <begin position="1"/>
        <end position="247"/>
    </location>
</feature>
<feature type="region of interest" description="Disordered" evidence="2">
    <location>
        <begin position="209"/>
        <end position="247"/>
    </location>
</feature>
<feature type="coiled-coil region" evidence="1">
    <location>
        <begin position="198"/>
        <end position="224"/>
    </location>
</feature>
<feature type="compositionally biased region" description="Basic and acidic residues" evidence="2">
    <location>
        <begin position="210"/>
        <end position="226"/>
    </location>
</feature>
<feature type="compositionally biased region" description="Polar residues" evidence="2">
    <location>
        <begin position="228"/>
        <end position="247"/>
    </location>
</feature>
<comment type="function">
    <text evidence="1">May be involved in photosynthetic membrane biogenesis.</text>
</comment>
<comment type="similarity">
    <text evidence="1">Belongs to the THF1 family.</text>
</comment>